<evidence type="ECO:0000255" key="1">
    <source>
        <dbReference type="HAMAP-Rule" id="MF_01576"/>
    </source>
</evidence>
<reference key="1">
    <citation type="submission" date="2007-06" db="EMBL/GenBank/DDBJ databases">
        <authorList>
            <person name="Dodson R.J."/>
            <person name="Harkins D."/>
            <person name="Paulsen I.T."/>
        </authorList>
    </citation>
    <scope>NUCLEOTIDE SEQUENCE [LARGE SCALE GENOMIC DNA]</scope>
    <source>
        <strain>DSM 24068 / PA7</strain>
    </source>
</reference>
<name>FOLD_PSEP7</name>
<proteinExistence type="inferred from homology"/>
<protein>
    <recommendedName>
        <fullName evidence="1">Bifunctional protein FolD</fullName>
    </recommendedName>
    <domain>
        <recommendedName>
            <fullName evidence="1">Methylenetetrahydrofolate dehydrogenase</fullName>
            <ecNumber evidence="1">1.5.1.5</ecNumber>
        </recommendedName>
    </domain>
    <domain>
        <recommendedName>
            <fullName evidence="1">Methenyltetrahydrofolate cyclohydrolase</fullName>
            <ecNumber evidence="1">3.5.4.9</ecNumber>
        </recommendedName>
    </domain>
</protein>
<dbReference type="EC" id="1.5.1.5" evidence="1"/>
<dbReference type="EC" id="3.5.4.9" evidence="1"/>
<dbReference type="EMBL" id="CP000744">
    <property type="protein sequence ID" value="ABR86773.1"/>
    <property type="molecule type" value="Genomic_DNA"/>
</dbReference>
<dbReference type="RefSeq" id="WP_012076177.1">
    <property type="nucleotide sequence ID" value="NC_009656.1"/>
</dbReference>
<dbReference type="SMR" id="A6V726"/>
<dbReference type="GeneID" id="77221620"/>
<dbReference type="KEGG" id="pap:PSPA7_3507"/>
<dbReference type="HOGENOM" id="CLU_034045_2_1_6"/>
<dbReference type="UniPathway" id="UPA00193"/>
<dbReference type="Proteomes" id="UP000001582">
    <property type="component" value="Chromosome"/>
</dbReference>
<dbReference type="GO" id="GO:0005829">
    <property type="term" value="C:cytosol"/>
    <property type="evidence" value="ECO:0007669"/>
    <property type="project" value="TreeGrafter"/>
</dbReference>
<dbReference type="GO" id="GO:0004477">
    <property type="term" value="F:methenyltetrahydrofolate cyclohydrolase activity"/>
    <property type="evidence" value="ECO:0007669"/>
    <property type="project" value="UniProtKB-UniRule"/>
</dbReference>
<dbReference type="GO" id="GO:0004488">
    <property type="term" value="F:methylenetetrahydrofolate dehydrogenase (NADP+) activity"/>
    <property type="evidence" value="ECO:0007669"/>
    <property type="project" value="UniProtKB-UniRule"/>
</dbReference>
<dbReference type="GO" id="GO:0000105">
    <property type="term" value="P:L-histidine biosynthetic process"/>
    <property type="evidence" value="ECO:0007669"/>
    <property type="project" value="UniProtKB-KW"/>
</dbReference>
<dbReference type="GO" id="GO:0009086">
    <property type="term" value="P:methionine biosynthetic process"/>
    <property type="evidence" value="ECO:0007669"/>
    <property type="project" value="UniProtKB-KW"/>
</dbReference>
<dbReference type="GO" id="GO:0006164">
    <property type="term" value="P:purine nucleotide biosynthetic process"/>
    <property type="evidence" value="ECO:0007669"/>
    <property type="project" value="UniProtKB-KW"/>
</dbReference>
<dbReference type="GO" id="GO:0035999">
    <property type="term" value="P:tetrahydrofolate interconversion"/>
    <property type="evidence" value="ECO:0007669"/>
    <property type="project" value="UniProtKB-UniRule"/>
</dbReference>
<dbReference type="CDD" id="cd01080">
    <property type="entry name" value="NAD_bind_m-THF_DH_Cyclohyd"/>
    <property type="match status" value="1"/>
</dbReference>
<dbReference type="FunFam" id="3.40.50.10860:FF:000001">
    <property type="entry name" value="Bifunctional protein FolD"/>
    <property type="match status" value="1"/>
</dbReference>
<dbReference type="FunFam" id="3.40.50.720:FF:000006">
    <property type="entry name" value="Bifunctional protein FolD"/>
    <property type="match status" value="1"/>
</dbReference>
<dbReference type="Gene3D" id="3.40.50.10860">
    <property type="entry name" value="Leucine Dehydrogenase, chain A, domain 1"/>
    <property type="match status" value="1"/>
</dbReference>
<dbReference type="Gene3D" id="3.40.50.720">
    <property type="entry name" value="NAD(P)-binding Rossmann-like Domain"/>
    <property type="match status" value="1"/>
</dbReference>
<dbReference type="HAMAP" id="MF_01576">
    <property type="entry name" value="THF_DHG_CYH"/>
    <property type="match status" value="1"/>
</dbReference>
<dbReference type="InterPro" id="IPR046346">
    <property type="entry name" value="Aminoacid_DH-like_N_sf"/>
</dbReference>
<dbReference type="InterPro" id="IPR036291">
    <property type="entry name" value="NAD(P)-bd_dom_sf"/>
</dbReference>
<dbReference type="InterPro" id="IPR000672">
    <property type="entry name" value="THF_DH/CycHdrlase"/>
</dbReference>
<dbReference type="InterPro" id="IPR020630">
    <property type="entry name" value="THF_DH/CycHdrlase_cat_dom"/>
</dbReference>
<dbReference type="InterPro" id="IPR020867">
    <property type="entry name" value="THF_DH/CycHdrlase_CS"/>
</dbReference>
<dbReference type="InterPro" id="IPR020631">
    <property type="entry name" value="THF_DH/CycHdrlase_NAD-bd_dom"/>
</dbReference>
<dbReference type="NCBIfam" id="NF008058">
    <property type="entry name" value="PRK10792.1"/>
    <property type="match status" value="1"/>
</dbReference>
<dbReference type="NCBIfam" id="NF010783">
    <property type="entry name" value="PRK14186.1"/>
    <property type="match status" value="1"/>
</dbReference>
<dbReference type="PANTHER" id="PTHR48099:SF5">
    <property type="entry name" value="C-1-TETRAHYDROFOLATE SYNTHASE, CYTOPLASMIC"/>
    <property type="match status" value="1"/>
</dbReference>
<dbReference type="PANTHER" id="PTHR48099">
    <property type="entry name" value="C-1-TETRAHYDROFOLATE SYNTHASE, CYTOPLASMIC-RELATED"/>
    <property type="match status" value="1"/>
</dbReference>
<dbReference type="Pfam" id="PF00763">
    <property type="entry name" value="THF_DHG_CYH"/>
    <property type="match status" value="1"/>
</dbReference>
<dbReference type="Pfam" id="PF02882">
    <property type="entry name" value="THF_DHG_CYH_C"/>
    <property type="match status" value="1"/>
</dbReference>
<dbReference type="PRINTS" id="PR00085">
    <property type="entry name" value="THFDHDRGNASE"/>
</dbReference>
<dbReference type="SUPFAM" id="SSF53223">
    <property type="entry name" value="Aminoacid dehydrogenase-like, N-terminal domain"/>
    <property type="match status" value="1"/>
</dbReference>
<dbReference type="SUPFAM" id="SSF51735">
    <property type="entry name" value="NAD(P)-binding Rossmann-fold domains"/>
    <property type="match status" value="1"/>
</dbReference>
<dbReference type="PROSITE" id="PS00766">
    <property type="entry name" value="THF_DHG_CYH_1"/>
    <property type="match status" value="1"/>
</dbReference>
<comment type="function">
    <text evidence="1">Catalyzes the oxidation of 5,10-methylenetetrahydrofolate to 5,10-methenyltetrahydrofolate and then the hydrolysis of 5,10-methenyltetrahydrofolate to 10-formyltetrahydrofolate.</text>
</comment>
<comment type="catalytic activity">
    <reaction evidence="1">
        <text>(6R)-5,10-methylene-5,6,7,8-tetrahydrofolate + NADP(+) = (6R)-5,10-methenyltetrahydrofolate + NADPH</text>
        <dbReference type="Rhea" id="RHEA:22812"/>
        <dbReference type="ChEBI" id="CHEBI:15636"/>
        <dbReference type="ChEBI" id="CHEBI:57455"/>
        <dbReference type="ChEBI" id="CHEBI:57783"/>
        <dbReference type="ChEBI" id="CHEBI:58349"/>
        <dbReference type="EC" id="1.5.1.5"/>
    </reaction>
</comment>
<comment type="catalytic activity">
    <reaction evidence="1">
        <text>(6R)-5,10-methenyltetrahydrofolate + H2O = (6R)-10-formyltetrahydrofolate + H(+)</text>
        <dbReference type="Rhea" id="RHEA:23700"/>
        <dbReference type="ChEBI" id="CHEBI:15377"/>
        <dbReference type="ChEBI" id="CHEBI:15378"/>
        <dbReference type="ChEBI" id="CHEBI:57455"/>
        <dbReference type="ChEBI" id="CHEBI:195366"/>
        <dbReference type="EC" id="3.5.4.9"/>
    </reaction>
</comment>
<comment type="pathway">
    <text evidence="1">One-carbon metabolism; tetrahydrofolate interconversion.</text>
</comment>
<comment type="subunit">
    <text evidence="1">Homodimer.</text>
</comment>
<comment type="similarity">
    <text evidence="1">Belongs to the tetrahydrofolate dehydrogenase/cyclohydrolase family.</text>
</comment>
<feature type="chain" id="PRO_1000069250" description="Bifunctional protein FolD">
    <location>
        <begin position="1"/>
        <end position="284"/>
    </location>
</feature>
<feature type="binding site" evidence="1">
    <location>
        <begin position="166"/>
        <end position="168"/>
    </location>
    <ligand>
        <name>NADP(+)</name>
        <dbReference type="ChEBI" id="CHEBI:58349"/>
    </ligand>
</feature>
<feature type="binding site" evidence="1">
    <location>
        <position position="232"/>
    </location>
    <ligand>
        <name>NADP(+)</name>
        <dbReference type="ChEBI" id="CHEBI:58349"/>
    </ligand>
</feature>
<accession>A6V726</accession>
<organism>
    <name type="scientific">Pseudomonas paraeruginosa (strain DSM 24068 / PA7)</name>
    <name type="common">Pseudomonas aeruginosa (strain PA7)</name>
    <dbReference type="NCBI Taxonomy" id="381754"/>
    <lineage>
        <taxon>Bacteria</taxon>
        <taxon>Pseudomonadati</taxon>
        <taxon>Pseudomonadota</taxon>
        <taxon>Gammaproteobacteria</taxon>
        <taxon>Pseudomonadales</taxon>
        <taxon>Pseudomonadaceae</taxon>
        <taxon>Pseudomonas</taxon>
        <taxon>Pseudomonas paraeruginosa</taxon>
    </lineage>
</organism>
<keyword id="KW-0028">Amino-acid biosynthesis</keyword>
<keyword id="KW-0368">Histidine biosynthesis</keyword>
<keyword id="KW-0378">Hydrolase</keyword>
<keyword id="KW-0486">Methionine biosynthesis</keyword>
<keyword id="KW-0511">Multifunctional enzyme</keyword>
<keyword id="KW-0521">NADP</keyword>
<keyword id="KW-0554">One-carbon metabolism</keyword>
<keyword id="KW-0560">Oxidoreductase</keyword>
<keyword id="KW-0658">Purine biosynthesis</keyword>
<gene>
    <name evidence="1" type="primary">folD</name>
    <name type="ordered locus">PSPA7_3507</name>
</gene>
<sequence length="284" mass="30519">MTAQLIDGKAIAANLRQQIAQRVTERRQQGLRVPGLAVILVGTDPASQVYVAHKRKDCEEVGFLSQAYDLPADTSQDELLALIDRLNDDPAIDGILVQLPLPAHLDASLLLERIHPDKDVDGFHPYNIGRLAQRMPLLRPCTPKGIMTLLASTGADLYGMDAVVVGASNIVGRPMALELLLGGCTVTVTHRFTRDLAAHVSRADLVVVAAGKPGLVKGEWIKEGAIVIDVGINRQADGRLVGDVEYDVAARRASWITPVPGGVGPMTRACLLENTLHAAEHLHD</sequence>